<dbReference type="EC" id="4.3.3.7" evidence="1"/>
<dbReference type="EMBL" id="AE015927">
    <property type="protein sequence ID" value="AAO36772.1"/>
    <property type="molecule type" value="Genomic_DNA"/>
</dbReference>
<dbReference type="RefSeq" id="WP_011100433.1">
    <property type="nucleotide sequence ID" value="NC_004557.1"/>
</dbReference>
<dbReference type="SMR" id="Q891S3"/>
<dbReference type="STRING" id="212717.CTC_02294"/>
<dbReference type="GeneID" id="24254608"/>
<dbReference type="KEGG" id="ctc:CTC_02294"/>
<dbReference type="HOGENOM" id="CLU_049343_7_1_9"/>
<dbReference type="OrthoDB" id="9782828at2"/>
<dbReference type="UniPathway" id="UPA00034">
    <property type="reaction ID" value="UER00017"/>
</dbReference>
<dbReference type="Proteomes" id="UP000001412">
    <property type="component" value="Chromosome"/>
</dbReference>
<dbReference type="GO" id="GO:0005829">
    <property type="term" value="C:cytosol"/>
    <property type="evidence" value="ECO:0007669"/>
    <property type="project" value="TreeGrafter"/>
</dbReference>
<dbReference type="GO" id="GO:0008840">
    <property type="term" value="F:4-hydroxy-tetrahydrodipicolinate synthase activity"/>
    <property type="evidence" value="ECO:0007669"/>
    <property type="project" value="UniProtKB-UniRule"/>
</dbReference>
<dbReference type="GO" id="GO:0019877">
    <property type="term" value="P:diaminopimelate biosynthetic process"/>
    <property type="evidence" value="ECO:0007669"/>
    <property type="project" value="UniProtKB-UniRule"/>
</dbReference>
<dbReference type="GO" id="GO:0009089">
    <property type="term" value="P:lysine biosynthetic process via diaminopimelate"/>
    <property type="evidence" value="ECO:0007669"/>
    <property type="project" value="UniProtKB-UniRule"/>
</dbReference>
<dbReference type="CDD" id="cd00950">
    <property type="entry name" value="DHDPS"/>
    <property type="match status" value="1"/>
</dbReference>
<dbReference type="Gene3D" id="3.20.20.70">
    <property type="entry name" value="Aldolase class I"/>
    <property type="match status" value="1"/>
</dbReference>
<dbReference type="HAMAP" id="MF_00418">
    <property type="entry name" value="DapA"/>
    <property type="match status" value="1"/>
</dbReference>
<dbReference type="InterPro" id="IPR013785">
    <property type="entry name" value="Aldolase_TIM"/>
</dbReference>
<dbReference type="InterPro" id="IPR005263">
    <property type="entry name" value="DapA"/>
</dbReference>
<dbReference type="InterPro" id="IPR002220">
    <property type="entry name" value="DapA-like"/>
</dbReference>
<dbReference type="InterPro" id="IPR020625">
    <property type="entry name" value="Schiff_base-form_aldolases_AS"/>
</dbReference>
<dbReference type="InterPro" id="IPR020624">
    <property type="entry name" value="Schiff_base-form_aldolases_CS"/>
</dbReference>
<dbReference type="NCBIfam" id="TIGR00674">
    <property type="entry name" value="dapA"/>
    <property type="match status" value="1"/>
</dbReference>
<dbReference type="PANTHER" id="PTHR12128:SF66">
    <property type="entry name" value="4-HYDROXY-2-OXOGLUTARATE ALDOLASE, MITOCHONDRIAL"/>
    <property type="match status" value="1"/>
</dbReference>
<dbReference type="PANTHER" id="PTHR12128">
    <property type="entry name" value="DIHYDRODIPICOLINATE SYNTHASE"/>
    <property type="match status" value="1"/>
</dbReference>
<dbReference type="Pfam" id="PF00701">
    <property type="entry name" value="DHDPS"/>
    <property type="match status" value="1"/>
</dbReference>
<dbReference type="PIRSF" id="PIRSF001365">
    <property type="entry name" value="DHDPS"/>
    <property type="match status" value="1"/>
</dbReference>
<dbReference type="PRINTS" id="PR00146">
    <property type="entry name" value="DHPICSNTHASE"/>
</dbReference>
<dbReference type="SMART" id="SM01130">
    <property type="entry name" value="DHDPS"/>
    <property type="match status" value="1"/>
</dbReference>
<dbReference type="SUPFAM" id="SSF51569">
    <property type="entry name" value="Aldolase"/>
    <property type="match status" value="1"/>
</dbReference>
<dbReference type="PROSITE" id="PS00665">
    <property type="entry name" value="DHDPS_1"/>
    <property type="match status" value="1"/>
</dbReference>
<dbReference type="PROSITE" id="PS00666">
    <property type="entry name" value="DHDPS_2"/>
    <property type="match status" value="1"/>
</dbReference>
<name>DAPA_CLOTE</name>
<keyword id="KW-0028">Amino-acid biosynthesis</keyword>
<keyword id="KW-0963">Cytoplasm</keyword>
<keyword id="KW-0220">Diaminopimelate biosynthesis</keyword>
<keyword id="KW-0456">Lyase</keyword>
<keyword id="KW-0457">Lysine biosynthesis</keyword>
<keyword id="KW-1185">Reference proteome</keyword>
<keyword id="KW-0704">Schiff base</keyword>
<protein>
    <recommendedName>
        <fullName evidence="1">4-hydroxy-tetrahydrodipicolinate synthase</fullName>
        <shortName evidence="1">HTPA synthase</shortName>
        <ecNumber evidence="1">4.3.3.7</ecNumber>
    </recommendedName>
</protein>
<sequence>MSIFKGSGVAIVTPFCENGVNFKKLEELIEWHIENSTDAIVICGTTGEASTMTEAEIKETIKFTVDKVQGRIPVIAGTGSNNTRKAIELSKWAKSIGVDGLLLITPYYNKTTQKGIVEHFKAINDDVDVPIILYNVPGRTGLNILPKTLVKICDTCSNVVAIKEASGDLSQIIEMKALLKDRIDIYSGNDDQIIPILSIGGIGVISVLANIMPKEVHDMCELYLKGKTKKALEIQLNTLSLTNSLFIETNPIPVKTAMNIMGIDVGELRLPLCNMDESNLNLLKKELSNHALIK</sequence>
<proteinExistence type="inferred from homology"/>
<evidence type="ECO:0000255" key="1">
    <source>
        <dbReference type="HAMAP-Rule" id="MF_00418"/>
    </source>
</evidence>
<evidence type="ECO:0000305" key="2"/>
<gene>
    <name evidence="1" type="primary">dapA</name>
    <name type="ordered locus">CTC_02294</name>
</gene>
<accession>Q891S3</accession>
<comment type="function">
    <text evidence="1">Catalyzes the condensation of (S)-aspartate-beta-semialdehyde [(S)-ASA] and pyruvate to 4-hydroxy-tetrahydrodipicolinate (HTPA).</text>
</comment>
<comment type="catalytic activity">
    <reaction evidence="1">
        <text>L-aspartate 4-semialdehyde + pyruvate = (2S,4S)-4-hydroxy-2,3,4,5-tetrahydrodipicolinate + H2O + H(+)</text>
        <dbReference type="Rhea" id="RHEA:34171"/>
        <dbReference type="ChEBI" id="CHEBI:15361"/>
        <dbReference type="ChEBI" id="CHEBI:15377"/>
        <dbReference type="ChEBI" id="CHEBI:15378"/>
        <dbReference type="ChEBI" id="CHEBI:67139"/>
        <dbReference type="ChEBI" id="CHEBI:537519"/>
        <dbReference type="EC" id="4.3.3.7"/>
    </reaction>
</comment>
<comment type="pathway">
    <text evidence="1">Amino-acid biosynthesis; L-lysine biosynthesis via DAP pathway; (S)-tetrahydrodipicolinate from L-aspartate: step 3/4.</text>
</comment>
<comment type="subunit">
    <text evidence="1">Homotetramer; dimer of dimers.</text>
</comment>
<comment type="subcellular location">
    <subcellularLocation>
        <location evidence="1">Cytoplasm</location>
    </subcellularLocation>
</comment>
<comment type="similarity">
    <text evidence="1">Belongs to the DapA family.</text>
</comment>
<comment type="caution">
    <text evidence="2">Was originally thought to be a dihydrodipicolinate synthase (DHDPS), catalyzing the condensation of (S)-aspartate-beta-semialdehyde [(S)-ASA] and pyruvate to dihydrodipicolinate (DHDP). However, it was shown in E.coli that the product of the enzymatic reaction is not dihydrodipicolinate but in fact (4S)-4-hydroxy-2,3,4,5-tetrahydro-(2S)-dipicolinic acid (HTPA), and that the consecutive dehydration reaction leading to DHDP is not spontaneous but catalyzed by DapB.</text>
</comment>
<organism>
    <name type="scientific">Clostridium tetani (strain Massachusetts / E88)</name>
    <dbReference type="NCBI Taxonomy" id="212717"/>
    <lineage>
        <taxon>Bacteria</taxon>
        <taxon>Bacillati</taxon>
        <taxon>Bacillota</taxon>
        <taxon>Clostridia</taxon>
        <taxon>Eubacteriales</taxon>
        <taxon>Clostridiaceae</taxon>
        <taxon>Clostridium</taxon>
    </lineage>
</organism>
<feature type="chain" id="PRO_0000103106" description="4-hydroxy-tetrahydrodipicolinate synthase">
    <location>
        <begin position="1"/>
        <end position="294"/>
    </location>
</feature>
<feature type="active site" description="Proton donor/acceptor" evidence="1">
    <location>
        <position position="134"/>
    </location>
</feature>
<feature type="active site" description="Schiff-base intermediate with substrate" evidence="1">
    <location>
        <position position="163"/>
    </location>
</feature>
<feature type="binding site" evidence="1">
    <location>
        <position position="46"/>
    </location>
    <ligand>
        <name>pyruvate</name>
        <dbReference type="ChEBI" id="CHEBI:15361"/>
    </ligand>
</feature>
<feature type="binding site" evidence="1">
    <location>
        <position position="205"/>
    </location>
    <ligand>
        <name>pyruvate</name>
        <dbReference type="ChEBI" id="CHEBI:15361"/>
    </ligand>
</feature>
<feature type="site" description="Part of a proton relay during catalysis" evidence="1">
    <location>
        <position position="45"/>
    </location>
</feature>
<feature type="site" description="Part of a proton relay during catalysis" evidence="1">
    <location>
        <position position="108"/>
    </location>
</feature>
<reference key="1">
    <citation type="journal article" date="2003" name="Proc. Natl. Acad. Sci. U.S.A.">
        <title>The genome sequence of Clostridium tetani, the causative agent of tetanus disease.</title>
        <authorList>
            <person name="Brueggemann H."/>
            <person name="Baeumer S."/>
            <person name="Fricke W.F."/>
            <person name="Wiezer A."/>
            <person name="Liesegang H."/>
            <person name="Decker I."/>
            <person name="Herzberg C."/>
            <person name="Martinez-Arias R."/>
            <person name="Merkl R."/>
            <person name="Henne A."/>
            <person name="Gottschalk G."/>
        </authorList>
    </citation>
    <scope>NUCLEOTIDE SEQUENCE [LARGE SCALE GENOMIC DNA]</scope>
    <source>
        <strain>Massachusetts / E88</strain>
    </source>
</reference>